<keyword id="KW-0004">4Fe-4S</keyword>
<keyword id="KW-0963">Cytoplasm</keyword>
<keyword id="KW-0408">Iron</keyword>
<keyword id="KW-0411">Iron-sulfur</keyword>
<keyword id="KW-0479">Metal-binding</keyword>
<keyword id="KW-0560">Oxidoreductase</keyword>
<keyword id="KW-0949">S-adenosyl-L-methionine</keyword>
<organism>
    <name type="scientific">Salmonella typhi</name>
    <dbReference type="NCBI Taxonomy" id="90370"/>
    <lineage>
        <taxon>Bacteria</taxon>
        <taxon>Pseudomonadati</taxon>
        <taxon>Pseudomonadota</taxon>
        <taxon>Gammaproteobacteria</taxon>
        <taxon>Enterobacterales</taxon>
        <taxon>Enterobacteriaceae</taxon>
        <taxon>Salmonella</taxon>
    </lineage>
</organism>
<reference key="1">
    <citation type="journal article" date="2001" name="Nature">
        <title>Complete genome sequence of a multiple drug resistant Salmonella enterica serovar Typhi CT18.</title>
        <authorList>
            <person name="Parkhill J."/>
            <person name="Dougan G."/>
            <person name="James K.D."/>
            <person name="Thomson N.R."/>
            <person name="Pickard D."/>
            <person name="Wain J."/>
            <person name="Churcher C.M."/>
            <person name="Mungall K.L."/>
            <person name="Bentley S.D."/>
            <person name="Holden M.T.G."/>
            <person name="Sebaihia M."/>
            <person name="Baker S."/>
            <person name="Basham D."/>
            <person name="Brooks K."/>
            <person name="Chillingworth T."/>
            <person name="Connerton P."/>
            <person name="Cronin A."/>
            <person name="Davis P."/>
            <person name="Davies R.M."/>
            <person name="Dowd L."/>
            <person name="White N."/>
            <person name="Farrar J."/>
            <person name="Feltwell T."/>
            <person name="Hamlin N."/>
            <person name="Haque A."/>
            <person name="Hien T.T."/>
            <person name="Holroyd S."/>
            <person name="Jagels K."/>
            <person name="Krogh A."/>
            <person name="Larsen T.S."/>
            <person name="Leather S."/>
            <person name="Moule S."/>
            <person name="O'Gaora P."/>
            <person name="Parry C."/>
            <person name="Quail M.A."/>
            <person name="Rutherford K.M."/>
            <person name="Simmonds M."/>
            <person name="Skelton J."/>
            <person name="Stevens K."/>
            <person name="Whitehead S."/>
            <person name="Barrell B.G."/>
        </authorList>
    </citation>
    <scope>NUCLEOTIDE SEQUENCE [LARGE SCALE GENOMIC DNA]</scope>
    <source>
        <strain>CT18</strain>
    </source>
</reference>
<reference key="2">
    <citation type="journal article" date="2003" name="J. Bacteriol.">
        <title>Comparative genomics of Salmonella enterica serovar Typhi strains Ty2 and CT18.</title>
        <authorList>
            <person name="Deng W."/>
            <person name="Liou S.-R."/>
            <person name="Plunkett G. III"/>
            <person name="Mayhew G.F."/>
            <person name="Rose D.J."/>
            <person name="Burland V."/>
            <person name="Kodoyianni V."/>
            <person name="Schwartz D.C."/>
            <person name="Blattner F.R."/>
        </authorList>
    </citation>
    <scope>NUCLEOTIDE SEQUENCE [LARGE SCALE GENOMIC DNA]</scope>
    <source>
        <strain>ATCC 700931 / Ty2</strain>
    </source>
</reference>
<evidence type="ECO:0000250" key="1">
    <source>
        <dbReference type="UniProtKB" id="P0A9N4"/>
    </source>
</evidence>
<evidence type="ECO:0000250" key="2">
    <source>
        <dbReference type="UniProtKB" id="P0A9N8"/>
    </source>
</evidence>
<evidence type="ECO:0000305" key="3"/>
<gene>
    <name type="primary">nrdG</name>
    <name type="ordered locus">STY4790</name>
    <name type="ordered locus">t4485</name>
</gene>
<dbReference type="EC" id="1.97.1.-" evidence="2"/>
<dbReference type="EMBL" id="AL513382">
    <property type="protein sequence ID" value="CAD06911.1"/>
    <property type="molecule type" value="Genomic_DNA"/>
</dbReference>
<dbReference type="EMBL" id="AE014613">
    <property type="protein sequence ID" value="AAO71932.1"/>
    <property type="molecule type" value="Genomic_DNA"/>
</dbReference>
<dbReference type="RefSeq" id="NP_458868.1">
    <property type="nucleotide sequence ID" value="NC_003198.1"/>
</dbReference>
<dbReference type="RefSeq" id="WP_001268860.1">
    <property type="nucleotide sequence ID" value="NZ_WSUR01000016.1"/>
</dbReference>
<dbReference type="SMR" id="Q8Z138"/>
<dbReference type="STRING" id="220341.gene:17588611"/>
<dbReference type="KEGG" id="stt:t4485"/>
<dbReference type="KEGG" id="sty:STY4790"/>
<dbReference type="PATRIC" id="fig|220341.7.peg.4895"/>
<dbReference type="eggNOG" id="COG0602">
    <property type="taxonomic scope" value="Bacteria"/>
</dbReference>
<dbReference type="HOGENOM" id="CLU_089926_2_1_6"/>
<dbReference type="OMA" id="NDTRIPR"/>
<dbReference type="OrthoDB" id="9782387at2"/>
<dbReference type="Proteomes" id="UP000000541">
    <property type="component" value="Chromosome"/>
</dbReference>
<dbReference type="Proteomes" id="UP000002670">
    <property type="component" value="Chromosome"/>
</dbReference>
<dbReference type="GO" id="GO:0005737">
    <property type="term" value="C:cytoplasm"/>
    <property type="evidence" value="ECO:0007669"/>
    <property type="project" value="UniProtKB-SubCell"/>
</dbReference>
<dbReference type="GO" id="GO:0051539">
    <property type="term" value="F:4 iron, 4 sulfur cluster binding"/>
    <property type="evidence" value="ECO:0007669"/>
    <property type="project" value="UniProtKB-KW"/>
</dbReference>
<dbReference type="GO" id="GO:0043365">
    <property type="term" value="F:[formate-C-acetyltransferase]-activating enzyme activity"/>
    <property type="evidence" value="ECO:0007669"/>
    <property type="project" value="InterPro"/>
</dbReference>
<dbReference type="GO" id="GO:0046872">
    <property type="term" value="F:metal ion binding"/>
    <property type="evidence" value="ECO:0007669"/>
    <property type="project" value="UniProtKB-KW"/>
</dbReference>
<dbReference type="GO" id="GO:0004748">
    <property type="term" value="F:ribonucleoside-diphosphate reductase activity, thioredoxin disulfide as acceptor"/>
    <property type="evidence" value="ECO:0007669"/>
    <property type="project" value="TreeGrafter"/>
</dbReference>
<dbReference type="CDD" id="cd01335">
    <property type="entry name" value="Radical_SAM"/>
    <property type="match status" value="1"/>
</dbReference>
<dbReference type="FunFam" id="3.20.20.70:FF:000087">
    <property type="entry name" value="Anaerobic ribonucleoside-triphosphate reductase-activating protein"/>
    <property type="match status" value="1"/>
</dbReference>
<dbReference type="Gene3D" id="3.20.20.70">
    <property type="entry name" value="Aldolase class I"/>
    <property type="match status" value="1"/>
</dbReference>
<dbReference type="InterPro" id="IPR013785">
    <property type="entry name" value="Aldolase_TIM"/>
</dbReference>
<dbReference type="InterPro" id="IPR012837">
    <property type="entry name" value="NrdG"/>
</dbReference>
<dbReference type="InterPro" id="IPR034457">
    <property type="entry name" value="Organic_radical-activating"/>
</dbReference>
<dbReference type="InterPro" id="IPR001989">
    <property type="entry name" value="Radical_activat_CS"/>
</dbReference>
<dbReference type="NCBIfam" id="TIGR02491">
    <property type="entry name" value="NrdG"/>
    <property type="match status" value="1"/>
</dbReference>
<dbReference type="NCBIfam" id="NF008335">
    <property type="entry name" value="PRK11121.1"/>
    <property type="match status" value="1"/>
</dbReference>
<dbReference type="PANTHER" id="PTHR30352:SF2">
    <property type="entry name" value="ANAEROBIC RIBONUCLEOSIDE-TRIPHOSPHATE REDUCTASE-ACTIVATING PROTEIN"/>
    <property type="match status" value="1"/>
</dbReference>
<dbReference type="PANTHER" id="PTHR30352">
    <property type="entry name" value="PYRUVATE FORMATE-LYASE-ACTIVATING ENZYME"/>
    <property type="match status" value="1"/>
</dbReference>
<dbReference type="Pfam" id="PF13353">
    <property type="entry name" value="Fer4_12"/>
    <property type="match status" value="1"/>
</dbReference>
<dbReference type="PIRSF" id="PIRSF000368">
    <property type="entry name" value="NrdG"/>
    <property type="match status" value="1"/>
</dbReference>
<dbReference type="SFLD" id="SFLDF00299">
    <property type="entry name" value="anaerobic_ribonucleoside-triph"/>
    <property type="match status" value="1"/>
</dbReference>
<dbReference type="SFLD" id="SFLDG01066">
    <property type="entry name" value="organic_radical-activating_enz"/>
    <property type="match status" value="1"/>
</dbReference>
<dbReference type="SUPFAM" id="SSF102114">
    <property type="entry name" value="Radical SAM enzymes"/>
    <property type="match status" value="1"/>
</dbReference>
<dbReference type="PROSITE" id="PS01087">
    <property type="entry name" value="RADICAL_ACTIVATING"/>
    <property type="match status" value="1"/>
</dbReference>
<sequence length="154" mass="17461">MRYHQYYPVDIVNGPGTRCTLFVSGCVHECPGCYNKSTWRLNSGQPFTKEMEDKIIADLNDTRIHRQGISLSGGDPLHPQNVPDILALVQRIHAECPGKDIWVWTGYRLDELNAAQMQVVNLINVLVDGKFVQDLKDPALIWRGSSNQVVHHLR</sequence>
<accession>Q8Z138</accession>
<name>NRDG_SALTI</name>
<comment type="function">
    <text evidence="2">Activation of anaerobic ribonucleoside-triphosphate reductase under anaerobic conditions by generation of an organic free radical, using S-adenosylmethionine and reduced flavodoxin as cosubstrates to produce 5'-deoxy-adenosine.</text>
</comment>
<comment type="catalytic activity">
    <reaction evidence="2">
        <text>glycyl-[protein] + reduced [flavodoxin] + S-adenosyl-L-methionine = glycin-2-yl radical-[protein] + semiquinone [flavodoxin] + 5'-deoxyadenosine + L-methionine + H(+)</text>
        <dbReference type="Rhea" id="RHEA:61976"/>
        <dbReference type="Rhea" id="RHEA-COMP:10622"/>
        <dbReference type="Rhea" id="RHEA-COMP:14480"/>
        <dbReference type="Rhea" id="RHEA-COMP:15993"/>
        <dbReference type="Rhea" id="RHEA-COMP:15994"/>
        <dbReference type="ChEBI" id="CHEBI:15378"/>
        <dbReference type="ChEBI" id="CHEBI:17319"/>
        <dbReference type="ChEBI" id="CHEBI:29947"/>
        <dbReference type="ChEBI" id="CHEBI:32722"/>
        <dbReference type="ChEBI" id="CHEBI:57618"/>
        <dbReference type="ChEBI" id="CHEBI:57844"/>
        <dbReference type="ChEBI" id="CHEBI:59789"/>
        <dbReference type="ChEBI" id="CHEBI:140311"/>
    </reaction>
</comment>
<comment type="cofactor">
    <cofactor evidence="2">
        <name>[4Fe-4S] cluster</name>
        <dbReference type="ChEBI" id="CHEBI:49883"/>
    </cofactor>
    <text evidence="1">Binds 1 [4Fe-4S] cluster. The cluster is coordinated with 3 cysteines and an exchangeable S-adenosyl-L-methionine.</text>
</comment>
<comment type="subunit">
    <text evidence="2">Forms a tetramer composed of two NrdD and two NrdG subunits.</text>
</comment>
<comment type="subcellular location">
    <subcellularLocation>
        <location evidence="2">Cytoplasm</location>
    </subcellularLocation>
</comment>
<comment type="similarity">
    <text evidence="3">Belongs to the organic radical-activating enzymes family.</text>
</comment>
<proteinExistence type="inferred from homology"/>
<protein>
    <recommendedName>
        <fullName evidence="2">Anaerobic ribonucleoside-triphosphate reductase-activating protein</fullName>
        <ecNumber evidence="2">1.97.1.-</ecNumber>
    </recommendedName>
    <alternativeName>
        <fullName evidence="2">Class III anaerobic ribonucleotide reductase small component</fullName>
    </alternativeName>
</protein>
<feature type="chain" id="PRO_0000200539" description="Anaerobic ribonucleoside-triphosphate reductase-activating protein">
    <location>
        <begin position="1"/>
        <end position="154"/>
    </location>
</feature>
<feature type="binding site" evidence="1">
    <location>
        <position position="26"/>
    </location>
    <ligand>
        <name>[4Fe-4S] cluster</name>
        <dbReference type="ChEBI" id="CHEBI:49883"/>
        <note>4Fe-4S-S-AdoMet</note>
    </ligand>
</feature>
<feature type="binding site" evidence="1">
    <location>
        <position position="30"/>
    </location>
    <ligand>
        <name>[4Fe-4S] cluster</name>
        <dbReference type="ChEBI" id="CHEBI:49883"/>
        <note>4Fe-4S-S-AdoMet</note>
    </ligand>
</feature>
<feature type="binding site" evidence="1">
    <location>
        <begin position="32"/>
        <end position="34"/>
    </location>
    <ligand>
        <name>S-adenosyl-L-methionine</name>
        <dbReference type="ChEBI" id="CHEBI:59789"/>
    </ligand>
</feature>
<feature type="binding site" evidence="1">
    <location>
        <position position="33"/>
    </location>
    <ligand>
        <name>[4Fe-4S] cluster</name>
        <dbReference type="ChEBI" id="CHEBI:49883"/>
        <note>4Fe-4S-S-AdoMet</note>
    </ligand>
</feature>
<feature type="binding site" evidence="1">
    <location>
        <position position="74"/>
    </location>
    <ligand>
        <name>S-adenosyl-L-methionine</name>
        <dbReference type="ChEBI" id="CHEBI:59789"/>
    </ligand>
</feature>